<accession>O51900</accession>
<accession>E0SLE0</accession>
<evidence type="ECO:0000250" key="1">
    <source>
        <dbReference type="UniProtKB" id="P13039"/>
    </source>
</evidence>
<evidence type="ECO:0000305" key="2"/>
<protein>
    <recommendedName>
        <fullName evidence="1">Iron(III) enterobactin esterase</fullName>
        <ecNumber evidence="1">3.1.1.108</ecNumber>
    </recommendedName>
    <alternativeName>
        <fullName>Enterochelin esterase</fullName>
    </alternativeName>
    <alternativeName>
        <fullName>Ferric enterobactin esterase</fullName>
    </alternativeName>
</protein>
<sequence length="435" mass="48604">MPAAQPSGFVATLLSSPQAGEEAWWQQVARLGTPLVEAQDSGRVRMTFLWRDPDGDERYSAIRRVYADINGVTDHHSTDPQSLERLPGTDVWHWSMAIEHDWRGSYSLIPIVAAQLPPVFSDDGQLRDEQQREWWCSLFPCAIADPLNRDQSWGEQLSAAHMPAAPSQQAWRAVDNGTALPPDAARLTVLDWKSEQLDNQRRIWLYTTGISDEPAQRPLCIVLDGQKWAEETPLFAALEAETAAGHLPPAVWLFIDAIDGETRCRELPCDAAFWLAVQDELLPQAARLAPFSDDPDRTVVSGQSYGGLAALYAGLHWPQRFGRVLTQSGSFWWPNLQFITDFDQRDTLEPGVLVTEVRQGGQTAWPLVIFQEAGRREADIAFVNQQMHEALVAAGHQVHQRVYAGGHDTLCWRGGLIDGFRWLLTGDDPQAASRD</sequence>
<proteinExistence type="inferred from homology"/>
<name>FES_DICD3</name>
<comment type="function">
    <text evidence="1">Catalyzes the hydrolysis of ferric enterobactin (Fe-Ent). Is responsible for the release of iron from ferric enterobactin.</text>
</comment>
<comment type="catalytic activity">
    <reaction evidence="1">
        <text>Fe(III)-enterobactin + 3 H2O + H(+) = Fe(III)-[N-(2,3-dihydroxybenzoyl)-L-serine] + 2 N-(2,3-dihydroxybenzoyl)-L-serine</text>
        <dbReference type="Rhea" id="RHEA:30111"/>
        <dbReference type="ChEBI" id="CHEBI:15377"/>
        <dbReference type="ChEBI" id="CHEBI:15378"/>
        <dbReference type="ChEBI" id="CHEBI:28199"/>
        <dbReference type="ChEBI" id="CHEBI:58154"/>
        <dbReference type="ChEBI" id="CHEBI:143010"/>
        <dbReference type="EC" id="3.1.1.108"/>
    </reaction>
    <physiologicalReaction direction="left-to-right" evidence="1">
        <dbReference type="Rhea" id="RHEA:30112"/>
    </physiologicalReaction>
</comment>
<comment type="catalytic activity">
    <reaction evidence="1">
        <text>Fe(III)-enterobactin + H2O = Fe(III)-[N-(2,3-dihydroxybenzoyl)-L-serine]3 + H(+)</text>
        <dbReference type="Rhea" id="RHEA:59256"/>
        <dbReference type="ChEBI" id="CHEBI:15377"/>
        <dbReference type="ChEBI" id="CHEBI:15378"/>
        <dbReference type="ChEBI" id="CHEBI:28199"/>
        <dbReference type="ChEBI" id="CHEBI:143011"/>
    </reaction>
    <physiologicalReaction direction="left-to-right" evidence="1">
        <dbReference type="Rhea" id="RHEA:59257"/>
    </physiologicalReaction>
</comment>
<comment type="catalytic activity">
    <reaction evidence="1">
        <text>Fe(III)-[N-(2,3-dihydroxybenzoyl)-L-serine]3 + H2O + H(+) = Fe(III)-[N-(2,3-dihydroxybenzoyl)-L-serine]2 + N-(2,3-dihydroxybenzoyl)-L-serine</text>
        <dbReference type="Rhea" id="RHEA:59260"/>
        <dbReference type="ChEBI" id="CHEBI:15377"/>
        <dbReference type="ChEBI" id="CHEBI:15378"/>
        <dbReference type="ChEBI" id="CHEBI:58154"/>
        <dbReference type="ChEBI" id="CHEBI:143011"/>
        <dbReference type="ChEBI" id="CHEBI:143012"/>
    </reaction>
    <physiologicalReaction direction="left-to-right" evidence="1">
        <dbReference type="Rhea" id="RHEA:59261"/>
    </physiologicalReaction>
</comment>
<comment type="catalytic activity">
    <reaction evidence="1">
        <text>Fe(III)-[N-(2,3-dihydroxybenzoyl)-L-serine]2 + H2O + H(+) = Fe(III)-[N-(2,3-dihydroxybenzoyl)-L-serine] + N-(2,3-dihydroxybenzoyl)-L-serine</text>
        <dbReference type="Rhea" id="RHEA:59264"/>
        <dbReference type="ChEBI" id="CHEBI:15377"/>
        <dbReference type="ChEBI" id="CHEBI:15378"/>
        <dbReference type="ChEBI" id="CHEBI:58154"/>
        <dbReference type="ChEBI" id="CHEBI:143010"/>
        <dbReference type="ChEBI" id="CHEBI:143012"/>
    </reaction>
    <physiologicalReaction direction="left-to-right" evidence="1">
        <dbReference type="Rhea" id="RHEA:59265"/>
    </physiologicalReaction>
</comment>
<comment type="subcellular location">
    <subcellularLocation>
        <location evidence="1">Cytoplasm</location>
    </subcellularLocation>
</comment>
<comment type="similarity">
    <text evidence="2">Belongs to the Fes family.</text>
</comment>
<comment type="sequence caution" evidence="2">
    <conflict type="erroneous initiation">
        <sequence resource="EMBL-CDS" id="ADM99352"/>
    </conflict>
    <text>Truncated N-terminus.</text>
</comment>
<organism>
    <name type="scientific">Dickeya dadantii (strain 3937)</name>
    <name type="common">Erwinia chrysanthemi (strain 3937)</name>
    <dbReference type="NCBI Taxonomy" id="198628"/>
    <lineage>
        <taxon>Bacteria</taxon>
        <taxon>Pseudomonadati</taxon>
        <taxon>Pseudomonadota</taxon>
        <taxon>Gammaproteobacteria</taxon>
        <taxon>Enterobacterales</taxon>
        <taxon>Pectobacteriaceae</taxon>
        <taxon>Dickeya</taxon>
    </lineage>
</organism>
<reference key="1">
    <citation type="submission" date="1997-06" db="EMBL/GenBank/DDBJ databases">
        <title>Enigmatic role of the E. chrysanthemi ferric enterobactin esterase encoded from the fct-fes bidirectional promoter of the chrysobactin gene system.</title>
        <authorList>
            <person name="Masclaux C."/>
            <person name="Rauscher L."/>
            <person name="Sauvage C."/>
            <person name="Expert D."/>
        </authorList>
    </citation>
    <scope>NUCLEOTIDE SEQUENCE [GENOMIC DNA]</scope>
    <source>
        <strain>3937</strain>
    </source>
</reference>
<reference key="2">
    <citation type="journal article" date="2011" name="J. Bacteriol.">
        <title>Genome sequence of the plant-pathogenic bacterium Dickeya dadantii 3937.</title>
        <authorList>
            <person name="Glasner J.D."/>
            <person name="Yang C.H."/>
            <person name="Reverchon S."/>
            <person name="Hugouvieux-Cotte-Pattat N."/>
            <person name="Condemine G."/>
            <person name="Bohin J.P."/>
            <person name="Van Gijsegem F."/>
            <person name="Yang S."/>
            <person name="Franza T."/>
            <person name="Expert D."/>
            <person name="Plunkett G. III"/>
            <person name="San Francisco M.J."/>
            <person name="Charkowski A.O."/>
            <person name="Py B."/>
            <person name="Bell K."/>
            <person name="Rauscher L."/>
            <person name="Rodriguez-Palenzuela P."/>
            <person name="Toussaint A."/>
            <person name="Holeva M.C."/>
            <person name="He S.Y."/>
            <person name="Douet V."/>
            <person name="Boccara M."/>
            <person name="Blanco C."/>
            <person name="Toth I."/>
            <person name="Anderson B.D."/>
            <person name="Biehl B.S."/>
            <person name="Mau B."/>
            <person name="Flynn S.M."/>
            <person name="Barras F."/>
            <person name="Lindeberg M."/>
            <person name="Birch P.R."/>
            <person name="Tsuyumu S."/>
            <person name="Shi X."/>
            <person name="Hibbing M."/>
            <person name="Yap M.N."/>
            <person name="Carpentier M."/>
            <person name="Dassa E."/>
            <person name="Umehara M."/>
            <person name="Kim J.F."/>
            <person name="Rusch M."/>
            <person name="Soni P."/>
            <person name="Mayhew G.F."/>
            <person name="Fouts D.E."/>
            <person name="Gill S.R."/>
            <person name="Blattner F.R."/>
            <person name="Keen N.T."/>
            <person name="Perna N.T."/>
        </authorList>
    </citation>
    <scope>NUCLEOTIDE SEQUENCE [LARGE SCALE GENOMIC DNA]</scope>
    <source>
        <strain>3937</strain>
    </source>
</reference>
<feature type="chain" id="PRO_0000087231" description="Iron(III) enterobactin esterase">
    <location>
        <begin position="1"/>
        <end position="435"/>
    </location>
</feature>
<feature type="sequence conflict" description="In Ref. 1; AAB94505." evidence="2" ref="1">
    <original>VYADINGV</original>
    <variation>CMPISTAW</variation>
    <location>
        <begin position="65"/>
        <end position="72"/>
    </location>
</feature>
<feature type="sequence conflict" description="In Ref. 1; AAB94505." evidence="2" ref="1">
    <original>S</original>
    <variation>T</variation>
    <location>
        <position position="105"/>
    </location>
</feature>
<feature type="sequence conflict" description="In Ref. 1; AAB94505." evidence="2" ref="1">
    <location>
        <position position="118"/>
    </location>
</feature>
<feature type="sequence conflict" description="In Ref. 1; AAB94505." evidence="2" ref="1">
    <original>RD</original>
    <variation>LY</variation>
    <location>
        <begin position="149"/>
        <end position="150"/>
    </location>
</feature>
<feature type="sequence conflict" description="In Ref. 1; AAB94505." evidence="2" ref="1">
    <original>AAPSQQAWRAVDNGTALP</original>
    <variation>GGAVAAGLARGGQRYGVA</variation>
    <location>
        <begin position="164"/>
        <end position="181"/>
    </location>
</feature>
<feature type="sequence conflict" description="In Ref. 1; AAB94505." evidence="2" ref="1">
    <original>QAARL</original>
    <variation>HGRGS</variation>
    <location>
        <begin position="284"/>
        <end position="288"/>
    </location>
</feature>
<feature type="sequence conflict" description="In Ref. 1; AAB94505." evidence="2" ref="1">
    <original>G</original>
    <variation>A</variation>
    <location>
        <position position="419"/>
    </location>
</feature>
<feature type="sequence conflict" description="In Ref. 1; AAB94505." evidence="2" ref="1">
    <original>WL</original>
    <variation>CV</variation>
    <location>
        <begin position="422"/>
        <end position="423"/>
    </location>
</feature>
<gene>
    <name type="primary">fes</name>
    <name type="synonym">cbsH</name>
    <name type="ordered locus">Dda3937_03040</name>
</gene>
<dbReference type="EC" id="3.1.1.108" evidence="1"/>
<dbReference type="EMBL" id="AF011334">
    <property type="protein sequence ID" value="AAB94505.1"/>
    <property type="molecule type" value="Genomic_DNA"/>
</dbReference>
<dbReference type="EMBL" id="CP002038">
    <property type="protein sequence ID" value="ADM99352.1"/>
    <property type="status" value="ALT_INIT"/>
    <property type="molecule type" value="Genomic_DNA"/>
</dbReference>
<dbReference type="RefSeq" id="WP_033111969.1">
    <property type="nucleotide sequence ID" value="NC_014500.1"/>
</dbReference>
<dbReference type="SMR" id="O51900"/>
<dbReference type="STRING" id="198628.Dda3937_03040"/>
<dbReference type="ESTHER" id="erwch-fes">
    <property type="family name" value="A85-IroE-IroD-Fes-Yiel"/>
</dbReference>
<dbReference type="KEGG" id="ddd:Dda3937_03040"/>
<dbReference type="PATRIC" id="fig|198628.6.peg.3114"/>
<dbReference type="eggNOG" id="COG2382">
    <property type="taxonomic scope" value="Bacteria"/>
</dbReference>
<dbReference type="HOGENOM" id="CLU_024314_3_0_6"/>
<dbReference type="OrthoDB" id="9775130at2"/>
<dbReference type="BRENDA" id="3.1.1.108">
    <property type="organism ID" value="2141"/>
</dbReference>
<dbReference type="Proteomes" id="UP000006859">
    <property type="component" value="Chromosome"/>
</dbReference>
<dbReference type="GO" id="GO:0005737">
    <property type="term" value="C:cytoplasm"/>
    <property type="evidence" value="ECO:0007669"/>
    <property type="project" value="UniProtKB-SubCell"/>
</dbReference>
<dbReference type="GO" id="GO:0008849">
    <property type="term" value="F:enterochelin esterase activity"/>
    <property type="evidence" value="ECO:0007669"/>
    <property type="project" value="InterPro"/>
</dbReference>
<dbReference type="GO" id="GO:0005506">
    <property type="term" value="F:iron ion binding"/>
    <property type="evidence" value="ECO:0007669"/>
    <property type="project" value="InterPro"/>
</dbReference>
<dbReference type="GO" id="GO:0008233">
    <property type="term" value="F:peptidase activity"/>
    <property type="evidence" value="ECO:0000315"/>
    <property type="project" value="ASAP"/>
</dbReference>
<dbReference type="GO" id="GO:0042859">
    <property type="term" value="P:chrysobactin catabolic process"/>
    <property type="evidence" value="ECO:0000315"/>
    <property type="project" value="ASAP"/>
</dbReference>
<dbReference type="GO" id="GO:0006826">
    <property type="term" value="P:iron ion transport"/>
    <property type="evidence" value="ECO:0007669"/>
    <property type="project" value="InterPro"/>
</dbReference>
<dbReference type="Gene3D" id="3.40.50.1820">
    <property type="entry name" value="alpha/beta hydrolase"/>
    <property type="match status" value="1"/>
</dbReference>
<dbReference type="Gene3D" id="2.60.40.10">
    <property type="entry name" value="Immunoglobulins"/>
    <property type="match status" value="1"/>
</dbReference>
<dbReference type="InterPro" id="IPR029058">
    <property type="entry name" value="AB_hydrolase_fold"/>
</dbReference>
<dbReference type="InterPro" id="IPR021764">
    <property type="entry name" value="Enterochelin_esterase_N"/>
</dbReference>
<dbReference type="InterPro" id="IPR000801">
    <property type="entry name" value="Esterase-like"/>
</dbReference>
<dbReference type="InterPro" id="IPR013783">
    <property type="entry name" value="Ig-like_fold"/>
</dbReference>
<dbReference type="InterPro" id="IPR014756">
    <property type="entry name" value="Ig_E-set"/>
</dbReference>
<dbReference type="InterPro" id="IPR050583">
    <property type="entry name" value="Mycobacterial_A85_antigen"/>
</dbReference>
<dbReference type="NCBIfam" id="NF007758">
    <property type="entry name" value="PRK10439.1"/>
    <property type="match status" value="1"/>
</dbReference>
<dbReference type="PANTHER" id="PTHR48098">
    <property type="entry name" value="ENTEROCHELIN ESTERASE-RELATED"/>
    <property type="match status" value="1"/>
</dbReference>
<dbReference type="PANTHER" id="PTHR48098:SF3">
    <property type="entry name" value="IRON(III) ENTEROBACTIN ESTERASE"/>
    <property type="match status" value="1"/>
</dbReference>
<dbReference type="Pfam" id="PF11806">
    <property type="entry name" value="Enterochelin_N"/>
    <property type="match status" value="1"/>
</dbReference>
<dbReference type="Pfam" id="PF00756">
    <property type="entry name" value="Esterase"/>
    <property type="match status" value="1"/>
</dbReference>
<dbReference type="SUPFAM" id="SSF53474">
    <property type="entry name" value="alpha/beta-Hydrolases"/>
    <property type="match status" value="1"/>
</dbReference>
<dbReference type="SUPFAM" id="SSF81296">
    <property type="entry name" value="E set domains"/>
    <property type="match status" value="1"/>
</dbReference>
<keyword id="KW-0963">Cytoplasm</keyword>
<keyword id="KW-0378">Hydrolase</keyword>
<keyword id="KW-1185">Reference proteome</keyword>